<reference key="1">
    <citation type="submission" date="2006-10" db="EMBL/GenBank/DDBJ databases">
        <title>Complete sequence of Syntrophobacter fumaroxidans MPOB.</title>
        <authorList>
            <consortium name="US DOE Joint Genome Institute"/>
            <person name="Copeland A."/>
            <person name="Lucas S."/>
            <person name="Lapidus A."/>
            <person name="Barry K."/>
            <person name="Detter J.C."/>
            <person name="Glavina del Rio T."/>
            <person name="Hammon N."/>
            <person name="Israni S."/>
            <person name="Pitluck S."/>
            <person name="Goltsman E.G."/>
            <person name="Martinez M."/>
            <person name="Schmutz J."/>
            <person name="Larimer F."/>
            <person name="Land M."/>
            <person name="Hauser L."/>
            <person name="Kyrpides N."/>
            <person name="Kim E."/>
            <person name="Boone D.R."/>
            <person name="Brockman F."/>
            <person name="Culley D."/>
            <person name="Ferry J."/>
            <person name="Gunsalus R."/>
            <person name="McInerney M.J."/>
            <person name="Morrison M."/>
            <person name="Plugge C."/>
            <person name="Rohlin L."/>
            <person name="Scholten J."/>
            <person name="Sieber J."/>
            <person name="Stams A.J.M."/>
            <person name="Worm P."/>
            <person name="Henstra A.M."/>
            <person name="Richardson P."/>
        </authorList>
    </citation>
    <scope>NUCLEOTIDE SEQUENCE [LARGE SCALE GENOMIC DNA]</scope>
    <source>
        <strain>DSM 10017 / MPOB</strain>
    </source>
</reference>
<sequence>MKTVGELELSGKRVFIRVDFNVPLDKEFRVKDDLRIRAVLPTLNKVIEKGGKAILASHLGRPKGKPSAEFSLKPVGEHLSRLIDRPVPLAPDCTGREVVERIAQMKNGDVLLLENLRFHAEEEKNDEAFSRALADLADVYVNDAFAVSHRAHASVHGMTRFARECAAGYQLENEIKYFRKAMDNPARPMAMVIGGAKVSTKIGVLEHLISRVDFLVIGGAMANTFFKAQGKEVGRSLVEDDHLETAARLLKAAAEKGVKVYLPVDAVVAPSLESCGDVQQVPVEKVPKDRLILDVGSKSIEVFESVLKNCRTIVWNGPLGAFETPPFNKGTFALAEFLGSLDALTVIGGGDSAAAVKQANMEDKVSYVSTGGGAFLEMLEGITLPGVAALEECCGRS</sequence>
<accession>A0LJZ1</accession>
<comment type="catalytic activity">
    <reaction evidence="1">
        <text>(2R)-3-phosphoglycerate + ATP = (2R)-3-phospho-glyceroyl phosphate + ADP</text>
        <dbReference type="Rhea" id="RHEA:14801"/>
        <dbReference type="ChEBI" id="CHEBI:30616"/>
        <dbReference type="ChEBI" id="CHEBI:57604"/>
        <dbReference type="ChEBI" id="CHEBI:58272"/>
        <dbReference type="ChEBI" id="CHEBI:456216"/>
        <dbReference type="EC" id="2.7.2.3"/>
    </reaction>
</comment>
<comment type="pathway">
    <text evidence="1">Carbohydrate degradation; glycolysis; pyruvate from D-glyceraldehyde 3-phosphate: step 2/5.</text>
</comment>
<comment type="subunit">
    <text evidence="1">Monomer.</text>
</comment>
<comment type="subcellular location">
    <subcellularLocation>
        <location evidence="1">Cytoplasm</location>
    </subcellularLocation>
</comment>
<comment type="similarity">
    <text evidence="1">Belongs to the phosphoglycerate kinase family.</text>
</comment>
<gene>
    <name evidence="1" type="primary">pgk</name>
    <name type="ordered locus">Sfum_2060</name>
</gene>
<organism>
    <name type="scientific">Syntrophobacter fumaroxidans (strain DSM 10017 / MPOB)</name>
    <dbReference type="NCBI Taxonomy" id="335543"/>
    <lineage>
        <taxon>Bacteria</taxon>
        <taxon>Pseudomonadati</taxon>
        <taxon>Thermodesulfobacteriota</taxon>
        <taxon>Syntrophobacteria</taxon>
        <taxon>Syntrophobacterales</taxon>
        <taxon>Syntrophobacteraceae</taxon>
        <taxon>Syntrophobacter</taxon>
    </lineage>
</organism>
<keyword id="KW-0067">ATP-binding</keyword>
<keyword id="KW-0963">Cytoplasm</keyword>
<keyword id="KW-0324">Glycolysis</keyword>
<keyword id="KW-0418">Kinase</keyword>
<keyword id="KW-0547">Nucleotide-binding</keyword>
<keyword id="KW-1185">Reference proteome</keyword>
<keyword id="KW-0808">Transferase</keyword>
<feature type="chain" id="PRO_1000096386" description="Phosphoglycerate kinase">
    <location>
        <begin position="1"/>
        <end position="397"/>
    </location>
</feature>
<feature type="binding site" evidence="1">
    <location>
        <begin position="19"/>
        <end position="21"/>
    </location>
    <ligand>
        <name>substrate</name>
    </ligand>
</feature>
<feature type="binding site" evidence="1">
    <location>
        <position position="35"/>
    </location>
    <ligand>
        <name>substrate</name>
    </ligand>
</feature>
<feature type="binding site" evidence="1">
    <location>
        <begin position="58"/>
        <end position="61"/>
    </location>
    <ligand>
        <name>substrate</name>
    </ligand>
</feature>
<feature type="binding site" evidence="1">
    <location>
        <position position="117"/>
    </location>
    <ligand>
        <name>substrate</name>
    </ligand>
</feature>
<feature type="binding site" evidence="1">
    <location>
        <position position="150"/>
    </location>
    <ligand>
        <name>substrate</name>
    </ligand>
</feature>
<feature type="binding site" evidence="1">
    <location>
        <position position="201"/>
    </location>
    <ligand>
        <name>ATP</name>
        <dbReference type="ChEBI" id="CHEBI:30616"/>
    </ligand>
</feature>
<feature type="binding site" evidence="1">
    <location>
        <position position="323"/>
    </location>
    <ligand>
        <name>ATP</name>
        <dbReference type="ChEBI" id="CHEBI:30616"/>
    </ligand>
</feature>
<feature type="binding site" evidence="1">
    <location>
        <begin position="349"/>
        <end position="352"/>
    </location>
    <ligand>
        <name>ATP</name>
        <dbReference type="ChEBI" id="CHEBI:30616"/>
    </ligand>
</feature>
<dbReference type="EC" id="2.7.2.3" evidence="1"/>
<dbReference type="EMBL" id="CP000478">
    <property type="protein sequence ID" value="ABK17743.1"/>
    <property type="molecule type" value="Genomic_DNA"/>
</dbReference>
<dbReference type="RefSeq" id="WP_011698912.1">
    <property type="nucleotide sequence ID" value="NC_008554.1"/>
</dbReference>
<dbReference type="SMR" id="A0LJZ1"/>
<dbReference type="FunCoup" id="A0LJZ1">
    <property type="interactions" value="506"/>
</dbReference>
<dbReference type="STRING" id="335543.Sfum_2060"/>
<dbReference type="KEGG" id="sfu:Sfum_2060"/>
<dbReference type="eggNOG" id="COG0126">
    <property type="taxonomic scope" value="Bacteria"/>
</dbReference>
<dbReference type="HOGENOM" id="CLU_025427_0_2_7"/>
<dbReference type="InParanoid" id="A0LJZ1"/>
<dbReference type="OrthoDB" id="9808460at2"/>
<dbReference type="UniPathway" id="UPA00109">
    <property type="reaction ID" value="UER00185"/>
</dbReference>
<dbReference type="Proteomes" id="UP000001784">
    <property type="component" value="Chromosome"/>
</dbReference>
<dbReference type="GO" id="GO:0005829">
    <property type="term" value="C:cytosol"/>
    <property type="evidence" value="ECO:0007669"/>
    <property type="project" value="TreeGrafter"/>
</dbReference>
<dbReference type="GO" id="GO:0043531">
    <property type="term" value="F:ADP binding"/>
    <property type="evidence" value="ECO:0007669"/>
    <property type="project" value="TreeGrafter"/>
</dbReference>
<dbReference type="GO" id="GO:0005524">
    <property type="term" value="F:ATP binding"/>
    <property type="evidence" value="ECO:0007669"/>
    <property type="project" value="UniProtKB-KW"/>
</dbReference>
<dbReference type="GO" id="GO:0004618">
    <property type="term" value="F:phosphoglycerate kinase activity"/>
    <property type="evidence" value="ECO:0007669"/>
    <property type="project" value="UniProtKB-UniRule"/>
</dbReference>
<dbReference type="GO" id="GO:0006094">
    <property type="term" value="P:gluconeogenesis"/>
    <property type="evidence" value="ECO:0007669"/>
    <property type="project" value="TreeGrafter"/>
</dbReference>
<dbReference type="GO" id="GO:0006096">
    <property type="term" value="P:glycolytic process"/>
    <property type="evidence" value="ECO:0007669"/>
    <property type="project" value="UniProtKB-UniRule"/>
</dbReference>
<dbReference type="FunFam" id="3.40.50.1260:FF:000006">
    <property type="entry name" value="Phosphoglycerate kinase"/>
    <property type="match status" value="1"/>
</dbReference>
<dbReference type="FunFam" id="3.40.50.1260:FF:000031">
    <property type="entry name" value="Phosphoglycerate kinase 1"/>
    <property type="match status" value="1"/>
</dbReference>
<dbReference type="Gene3D" id="3.40.50.1260">
    <property type="entry name" value="Phosphoglycerate kinase, N-terminal domain"/>
    <property type="match status" value="2"/>
</dbReference>
<dbReference type="HAMAP" id="MF_00145">
    <property type="entry name" value="Phosphoglyc_kinase"/>
    <property type="match status" value="1"/>
</dbReference>
<dbReference type="InterPro" id="IPR001576">
    <property type="entry name" value="Phosphoglycerate_kinase"/>
</dbReference>
<dbReference type="InterPro" id="IPR015911">
    <property type="entry name" value="Phosphoglycerate_kinase_CS"/>
</dbReference>
<dbReference type="InterPro" id="IPR015824">
    <property type="entry name" value="Phosphoglycerate_kinase_N"/>
</dbReference>
<dbReference type="InterPro" id="IPR036043">
    <property type="entry name" value="Phosphoglycerate_kinase_sf"/>
</dbReference>
<dbReference type="PANTHER" id="PTHR11406">
    <property type="entry name" value="PHOSPHOGLYCERATE KINASE"/>
    <property type="match status" value="1"/>
</dbReference>
<dbReference type="PANTHER" id="PTHR11406:SF23">
    <property type="entry name" value="PHOSPHOGLYCERATE KINASE 1, CHLOROPLASTIC-RELATED"/>
    <property type="match status" value="1"/>
</dbReference>
<dbReference type="Pfam" id="PF00162">
    <property type="entry name" value="PGK"/>
    <property type="match status" value="1"/>
</dbReference>
<dbReference type="PIRSF" id="PIRSF000724">
    <property type="entry name" value="Pgk"/>
    <property type="match status" value="1"/>
</dbReference>
<dbReference type="PRINTS" id="PR00477">
    <property type="entry name" value="PHGLYCKINASE"/>
</dbReference>
<dbReference type="SUPFAM" id="SSF53748">
    <property type="entry name" value="Phosphoglycerate kinase"/>
    <property type="match status" value="1"/>
</dbReference>
<dbReference type="PROSITE" id="PS00111">
    <property type="entry name" value="PGLYCERATE_KINASE"/>
    <property type="match status" value="1"/>
</dbReference>
<evidence type="ECO:0000255" key="1">
    <source>
        <dbReference type="HAMAP-Rule" id="MF_00145"/>
    </source>
</evidence>
<protein>
    <recommendedName>
        <fullName evidence="1">Phosphoglycerate kinase</fullName>
        <ecNumber evidence="1">2.7.2.3</ecNumber>
    </recommendedName>
</protein>
<name>PGK_SYNFM</name>
<proteinExistence type="inferred from homology"/>